<organismHost>
    <name type="scientific">Acrocephalus scirpaceus</name>
    <name type="common">Eurasian reed-warbler</name>
    <dbReference type="NCBI Taxonomy" id="48156"/>
</organismHost>
<organismHost>
    <name type="scientific">Aedes</name>
    <dbReference type="NCBI Taxonomy" id="7158"/>
</organismHost>
<organismHost>
    <name type="scientific">Culex</name>
    <dbReference type="NCBI Taxonomy" id="53527"/>
</organismHost>
<organismHost>
    <name type="scientific">Homo sapiens</name>
    <name type="common">Human</name>
    <dbReference type="NCBI Taxonomy" id="9606"/>
</organismHost>
<organismHost>
    <name type="scientific">Motacilla alba</name>
    <name type="common">White wagtail</name>
    <name type="synonym">Pied wagtail</name>
    <dbReference type="NCBI Taxonomy" id="45807"/>
</organismHost>
<organismHost>
    <name type="scientific">Streptopelia turtur</name>
    <dbReference type="NCBI Taxonomy" id="177155"/>
</organismHost>
<keyword id="KW-0067">ATP-binding</keyword>
<keyword id="KW-1262">Eukaryotic host gene expression shutoff by virus</keyword>
<keyword id="KW-1191">Eukaryotic host transcription shutoff by virus</keyword>
<keyword id="KW-0342">GTP-binding</keyword>
<keyword id="KW-0347">Helicase</keyword>
<keyword id="KW-1032">Host cell membrane</keyword>
<keyword id="KW-1034">Host cell projection</keyword>
<keyword id="KW-1035">Host cytoplasm</keyword>
<keyword id="KW-1036">Host cytoplasmic vesicle</keyword>
<keyword id="KW-1190">Host gene expression shutoff by virus</keyword>
<keyword id="KW-1043">Host membrane</keyword>
<keyword id="KW-1048">Host nucleus</keyword>
<keyword id="KW-0945">Host-virus interaction</keyword>
<keyword id="KW-0378">Hydrolase</keyword>
<keyword id="KW-1104">Inhibition of host RNA polymerase II by virus</keyword>
<keyword id="KW-0449">Lipoprotein</keyword>
<keyword id="KW-0472">Membrane</keyword>
<keyword id="KW-0479">Metal-binding</keyword>
<keyword id="KW-0489">Methyltransferase</keyword>
<keyword id="KW-0506">mRNA capping</keyword>
<keyword id="KW-0507">mRNA processing</keyword>
<keyword id="KW-0511">Multifunctional enzyme</keyword>
<keyword id="KW-0547">Nucleotide-binding</keyword>
<keyword id="KW-0548">Nucleotidyltransferase</keyword>
<keyword id="KW-0564">Palmitate</keyword>
<keyword id="KW-0597">Phosphoprotein</keyword>
<keyword id="KW-0645">Protease</keyword>
<keyword id="KW-1159">RNA suppression of termination</keyword>
<keyword id="KW-0694">RNA-binding</keyword>
<keyword id="KW-0696">RNA-directed RNA polymerase</keyword>
<keyword id="KW-0949">S-adenosyl-L-methionine</keyword>
<keyword id="KW-0788">Thiol protease</keyword>
<keyword id="KW-0808">Transferase</keyword>
<keyword id="KW-0832">Ubl conjugation</keyword>
<keyword id="KW-0693">Viral RNA replication</keyword>
<keyword id="KW-0862">Zinc</keyword>
<proteinExistence type="inferred from homology"/>
<name>POLN_SINDO</name>
<sequence length="2515" mass="279756">MEKPVVNVDVDPQSPFVVQLQKSFPQFEVVAQQATPNDHANARAFSHLASKLIELEVPTTATILDIGSAPARRMFSEHQYHCVCPMRSPEDPDRMMKYASKLAEKACKITNKNLHEKIKDLRTVLDTPDAETPSLCFHNDVTCNTRAEYSVMQDVYINAPGTIYHQAMKGVRTLYWIGFDTTQFMFSAMAGSYPAYNTNWADEKVLEARNIGLCSTKLSEGRTGKLSIMRKKELKPGSRVYFSVGSTLYPEHRASLQSWHLPSVFHLKGKQSYTCRCDTVVSCEGYVVKKITISPGITGETVGYAVTNNSEGFLLCKVTDTVKGERVSFPVCTYIPATICDQMTGIMATDISPDDAQKLLVGLNQRIVINGKTNRNTNTMQNYLLPTIAQGFSKWAKERKEDLDNEKMLGTRERKLTYGCLWAFRTKKVHSFYRPPGTQTSVKVPASFSAFPMSSVWTTSLPMSLRQKMKLALQPKKEEKLLQVPEELVMEAKAAFEDAQEEARAEKLREALPPLVADKDIEAAAEVVCEVEGLQADIGAALVETPRGHVRIIPQANDRMIGQYIVVSPTSVLKNAKLAPAHPLADQVKIITHSGRAGRYAVEPYDAKVLMPAGSAVPWPEFLALSESATLVYNEREFVNRKLYHIAMHGPAKNTEEEQYKVTKAELAETEYVFDVDKKRCVKKEEASGLVLSGELTNPPYHELALEGLKTRPAVPYKVETIGVIGTPGSGKSAIIKSTVTARDLVTSGKKENCREIEADVLRLRGMQITSKTVDSVMLNGCHKAVEVLYVDEAFACHAGALLALIAIVRPRKKVVLCGDPKQCGFFNMMQLKVHFNHPERDICTKTFYKFISRRCTQPVTAIVSTLHYDGKMKTTNPCKKNIEIDITGATKPKPGDIILTCFRGWVKQLQIDYPGHEVMTAAASQGLTRKGVYAVRQKVNENALYAITSEHVNVLLTRTEDRLVWKTLQGDPWIKQLTNVPKGNFQATIEDWEAEHKGIIAAINSPAPRTNPFSCKTNVCWAKALEPILATAGIVLTGCQWSELFPQFADDKPHSAIYALDVICIKFFGMDLTSGLFSKQSIPLTYHPADSARPVAHWDNSPGTRKYGYDHAVAAELSRRFPVFQLAGKGTQLDLQTGRTRVISAQHNLVPVNRNLPHALVPEHKEKQPGPVEKFLNQFKHHSVLVVSEEKIEAPHKRIEWIAPIGIAGADKNYNLAFGFPPQARYDLVFINIGTKYRNHHFQQCEDHAATLKTLSRSALNCLNPGGTLVVKSYGYADRNSEDVVTALARKFVRVSAARPECVSSNTEMYLIFRQLDNSRTRQFTPHHLNCVISSVYEGTRDGVGAAPSYRTKRENIADCQEEAVVNAANPLGRPGEGVCRAIYKRWPNSFTDSATETGTAKLTVCHGKKVIHAVGPDFRKHPEAEALKLLQNAYHAVADLVNEHNIKSVAIPLLSTGIYAAGKDRLEVSLNCLTTALDRTDADVTIYCLDKKWKERIDAVLQLKESVTELKDEDMEIDDELVWIHPDSCLKGRKGFSTTKGKLYSYFEGTKFHQAAKDMAEIKVLFPNDQESNEQLCAYILGETMEAIREKCPVDHNPSSSPPKTLPCLCMYAMTPERVHRLRSNNVKEVTVCSSTPLPKYKIKNVQKVQCTKVVLFNPHTPAFVPARKYIEVPEQPAAPPAQDEEAPEAVATPAPPAADNTSLDVTDISLDMDDSSEGSLFSSFSGSDNSITCMDRWSSGPSSLDRRQVVVADVHAVQEPAPIPPPRLKKMARLAAASKTQEEPIPPASTSSADESLHLSFGGVSMSFGSLLDGEMARLAAAQPPATGPTDVPMSFGSFSDGEIEELSRRVTESEPVLFGSFEPGEVNSIISSRSAVSFPLRKQRRRRRSRRTEYXLTGVGGYIFSTDTGPGHLQMKSVLQNQLTEPTLERNVLERIYAPVLDTSKEEQLKLRYQMMPTEANKSRYQSRKVENQKAITTERLLSGLRLYNSATDQPECYKITYPKPSYSSSVAANYSDPKFAVAVCNNYLHENYPTVASYQITDEYDAYLDMVDGTVACLDTATFCPAKLRSYPKRHEYRAPNIRSAVPSAMQNTLQNVLIAATKRNCNVTQMRELPTLDSATFNVECFRKYACNDEYWEEFARKPIRITTEFVTAYVARLKGPKAAALFAKTHNLVPLQEVPMDRFVMDMKRDVKVTPGTKHTEERPKVQVIQAAEPLATAYLCGIHRELVRRLTAVLLPNIHTLFDMSAEDFDAIIAEHFKQGDPVLETDIASFDKSQDDAMALTGLMILEDLGVDQPLLDLIECAFGEISSTHLPTGTRFKFGAMMKSGMFLTLFVNTVLNVVIASRVLEERLKTSKCAAFIGDDNIIHGVVSDKEMAERCATWLNMEVKIIDAVIGERPPYFCGGFILQDSVTSTACRVADPLKRLFKLGKPLPADDEQDEDRRRALLDETKAWFRVGITDTLAVAVATRYEVDNITPVLLALRTFAQSKRAFQAIRGEIKHLYGGPK</sequence>
<dbReference type="EC" id="2.1.1.-" evidence="4"/>
<dbReference type="EC" id="2.7.7.-" evidence="2"/>
<dbReference type="EC" id="3.4.22.-" evidence="6"/>
<dbReference type="EC" id="3.6.1.15" evidence="6"/>
<dbReference type="EC" id="3.6.1.74" evidence="3"/>
<dbReference type="EC" id="3.6.4.13" evidence="6"/>
<dbReference type="EC" id="3.1.3.84" evidence="13 6"/>
<dbReference type="EC" id="2.7.7.19" evidence="2"/>
<dbReference type="EC" id="2.7.7.48" evidence="8"/>
<dbReference type="EMBL" id="M69205">
    <property type="protein sequence ID" value="AAA96972.1"/>
    <property type="status" value="ALT_SEQ"/>
    <property type="molecule type" value="Genomic_RNA"/>
</dbReference>
<dbReference type="PIR" id="A39991">
    <property type="entry name" value="MNWV82"/>
</dbReference>
<dbReference type="IntAct" id="P27283">
    <property type="interactions" value="2"/>
</dbReference>
<dbReference type="MEROPS" id="C09.001"/>
<dbReference type="Proteomes" id="UP000006561">
    <property type="component" value="Genome"/>
</dbReference>
<dbReference type="GO" id="GO:0044162">
    <property type="term" value="C:host cell cytoplasmic vesicle membrane"/>
    <property type="evidence" value="ECO:0007669"/>
    <property type="project" value="UniProtKB-SubCell"/>
</dbReference>
<dbReference type="GO" id="GO:0044176">
    <property type="term" value="C:host cell filopodium"/>
    <property type="evidence" value="ECO:0007669"/>
    <property type="project" value="UniProtKB-SubCell"/>
</dbReference>
<dbReference type="GO" id="GO:0042025">
    <property type="term" value="C:host cell nucleus"/>
    <property type="evidence" value="ECO:0007669"/>
    <property type="project" value="UniProtKB-SubCell"/>
</dbReference>
<dbReference type="GO" id="GO:0020002">
    <property type="term" value="C:host cell plasma membrane"/>
    <property type="evidence" value="ECO:0007669"/>
    <property type="project" value="UniProtKB-SubCell"/>
</dbReference>
<dbReference type="GO" id="GO:0016020">
    <property type="term" value="C:membrane"/>
    <property type="evidence" value="ECO:0007669"/>
    <property type="project" value="UniProtKB-KW"/>
</dbReference>
<dbReference type="GO" id="GO:0005524">
    <property type="term" value="F:ATP binding"/>
    <property type="evidence" value="ECO:0007669"/>
    <property type="project" value="UniProtKB-KW"/>
</dbReference>
<dbReference type="GO" id="GO:0016887">
    <property type="term" value="F:ATP hydrolysis activity"/>
    <property type="evidence" value="ECO:0007669"/>
    <property type="project" value="RHEA"/>
</dbReference>
<dbReference type="GO" id="GO:0008234">
    <property type="term" value="F:cysteine-type peptidase activity"/>
    <property type="evidence" value="ECO:0007669"/>
    <property type="project" value="UniProtKB-KW"/>
</dbReference>
<dbReference type="GO" id="GO:0005525">
    <property type="term" value="F:GTP binding"/>
    <property type="evidence" value="ECO:0007669"/>
    <property type="project" value="UniProtKB-KW"/>
</dbReference>
<dbReference type="GO" id="GO:0046872">
    <property type="term" value="F:metal ion binding"/>
    <property type="evidence" value="ECO:0007669"/>
    <property type="project" value="UniProtKB-KW"/>
</dbReference>
<dbReference type="GO" id="GO:0140818">
    <property type="term" value="F:mRNA 5'-triphosphate monophosphatase activity"/>
    <property type="evidence" value="ECO:0007669"/>
    <property type="project" value="RHEA"/>
</dbReference>
<dbReference type="GO" id="GO:0008174">
    <property type="term" value="F:mRNA methyltransferase activity"/>
    <property type="evidence" value="ECO:0007669"/>
    <property type="project" value="InterPro"/>
</dbReference>
<dbReference type="GO" id="GO:1990817">
    <property type="term" value="F:poly(A) RNA polymerase activity"/>
    <property type="evidence" value="ECO:0007669"/>
    <property type="project" value="UniProtKB-EC"/>
</dbReference>
<dbReference type="GO" id="GO:0004651">
    <property type="term" value="F:polynucleotide 5'-phosphatase activity"/>
    <property type="evidence" value="ECO:0007669"/>
    <property type="project" value="UniProtKB-EC"/>
</dbReference>
<dbReference type="GO" id="GO:0003723">
    <property type="term" value="F:RNA binding"/>
    <property type="evidence" value="ECO:0007669"/>
    <property type="project" value="UniProtKB-KW"/>
</dbReference>
<dbReference type="GO" id="GO:0003724">
    <property type="term" value="F:RNA helicase activity"/>
    <property type="evidence" value="ECO:0007669"/>
    <property type="project" value="UniProtKB-EC"/>
</dbReference>
<dbReference type="GO" id="GO:0003968">
    <property type="term" value="F:RNA-directed RNA polymerase activity"/>
    <property type="evidence" value="ECO:0007669"/>
    <property type="project" value="UniProtKB-KW"/>
</dbReference>
<dbReference type="GO" id="GO:0006370">
    <property type="term" value="P:7-methylguanosine mRNA capping"/>
    <property type="evidence" value="ECO:0007669"/>
    <property type="project" value="UniProtKB-KW"/>
</dbReference>
<dbReference type="GO" id="GO:0006351">
    <property type="term" value="P:DNA-templated transcription"/>
    <property type="evidence" value="ECO:0007669"/>
    <property type="project" value="InterPro"/>
</dbReference>
<dbReference type="GO" id="GO:0032259">
    <property type="term" value="P:methylation"/>
    <property type="evidence" value="ECO:0007669"/>
    <property type="project" value="UniProtKB-KW"/>
</dbReference>
<dbReference type="GO" id="GO:0016556">
    <property type="term" value="P:mRNA modification"/>
    <property type="evidence" value="ECO:0007669"/>
    <property type="project" value="InterPro"/>
</dbReference>
<dbReference type="GO" id="GO:0006508">
    <property type="term" value="P:proteolysis"/>
    <property type="evidence" value="ECO:0007669"/>
    <property type="project" value="UniProtKB-KW"/>
</dbReference>
<dbReference type="GO" id="GO:0039657">
    <property type="term" value="P:symbiont-mediated suppression of host gene expression"/>
    <property type="evidence" value="ECO:0007669"/>
    <property type="project" value="UniProtKB-KW"/>
</dbReference>
<dbReference type="GO" id="GO:0039523">
    <property type="term" value="P:symbiont-mediated suppression of host mRNA transcription via inhibition of RNA polymerase II activity"/>
    <property type="evidence" value="ECO:0007669"/>
    <property type="project" value="UniProtKB-KW"/>
</dbReference>
<dbReference type="GO" id="GO:0039694">
    <property type="term" value="P:viral RNA genome replication"/>
    <property type="evidence" value="ECO:0007669"/>
    <property type="project" value="InterPro"/>
</dbReference>
<dbReference type="CDD" id="cd21557">
    <property type="entry name" value="Macro_X_Nsp3-like"/>
    <property type="match status" value="1"/>
</dbReference>
<dbReference type="CDD" id="cd23250">
    <property type="entry name" value="Togaviridae_RdRp"/>
    <property type="match status" value="1"/>
</dbReference>
<dbReference type="FunFam" id="3.40.220.10:FF:000015">
    <property type="entry name" value="Polyprotein P1234"/>
    <property type="match status" value="1"/>
</dbReference>
<dbReference type="FunFam" id="3.40.50.300:FF:001403">
    <property type="entry name" value="Polyprotein P1234"/>
    <property type="match status" value="1"/>
</dbReference>
<dbReference type="FunFam" id="3.40.50.300:FF:001415">
    <property type="entry name" value="Polyprotein P1234"/>
    <property type="match status" value="1"/>
</dbReference>
<dbReference type="FunFam" id="3.90.70.110:FF:000002">
    <property type="entry name" value="Polyprotein P1234"/>
    <property type="match status" value="1"/>
</dbReference>
<dbReference type="Gene3D" id="3.90.70.110">
    <property type="entry name" value="Alphavirus nsP2 protease domain"/>
    <property type="match status" value="1"/>
</dbReference>
<dbReference type="Gene3D" id="3.40.220.10">
    <property type="entry name" value="Leucine Aminopeptidase, subunit E, domain 1"/>
    <property type="match status" value="1"/>
</dbReference>
<dbReference type="Gene3D" id="3.40.50.300">
    <property type="entry name" value="P-loop containing nucleotide triphosphate hydrolases"/>
    <property type="match status" value="2"/>
</dbReference>
<dbReference type="Gene3D" id="3.40.50.150">
    <property type="entry name" value="Vaccinia Virus protein VP39"/>
    <property type="match status" value="1"/>
</dbReference>
<dbReference type="InterPro" id="IPR027351">
    <property type="entry name" value="(+)RNA_virus_helicase_core_dom"/>
</dbReference>
<dbReference type="InterPro" id="IPR002588">
    <property type="entry name" value="Alphavirus-like_MT_dom"/>
</dbReference>
<dbReference type="InterPro" id="IPR002620">
    <property type="entry name" value="Alphavirus_nsp2pro"/>
</dbReference>
<dbReference type="InterPro" id="IPR044936">
    <property type="entry name" value="Alphavirus_nsp2pro_sf"/>
</dbReference>
<dbReference type="InterPro" id="IPR043502">
    <property type="entry name" value="DNA/RNA_pol_sf"/>
</dbReference>
<dbReference type="InterPro" id="IPR002589">
    <property type="entry name" value="Macro_dom"/>
</dbReference>
<dbReference type="InterPro" id="IPR043472">
    <property type="entry name" value="Macro_dom-like"/>
</dbReference>
<dbReference type="InterPro" id="IPR044371">
    <property type="entry name" value="Macro_X_NSP3-like"/>
</dbReference>
<dbReference type="InterPro" id="IPR048891">
    <property type="entry name" value="nsP3_ZBD"/>
</dbReference>
<dbReference type="InterPro" id="IPR027417">
    <property type="entry name" value="P-loop_NTPase"/>
</dbReference>
<dbReference type="InterPro" id="IPR001788">
    <property type="entry name" value="RNA-dep_RNA_pol_alsuvir"/>
</dbReference>
<dbReference type="InterPro" id="IPR007094">
    <property type="entry name" value="RNA-dir_pol_PSvirus"/>
</dbReference>
<dbReference type="InterPro" id="IPR029063">
    <property type="entry name" value="SAM-dependent_MTases_sf"/>
</dbReference>
<dbReference type="InterPro" id="IPR047311">
    <property type="entry name" value="Togaviridae_RdRp"/>
</dbReference>
<dbReference type="InterPro" id="IPR049329">
    <property type="entry name" value="ToMV_Hel_N"/>
</dbReference>
<dbReference type="PANTHER" id="PTHR11106">
    <property type="entry name" value="GANGLIOSIDE INDUCED DIFFERENTIATION ASSOCIATED PROTEIN 2-RELATED"/>
    <property type="match status" value="1"/>
</dbReference>
<dbReference type="PANTHER" id="PTHR11106:SF27">
    <property type="entry name" value="MACRO DOMAIN-CONTAINING PROTEIN"/>
    <property type="match status" value="1"/>
</dbReference>
<dbReference type="Pfam" id="PF01661">
    <property type="entry name" value="Macro"/>
    <property type="match status" value="1"/>
</dbReference>
<dbReference type="Pfam" id="PF20852">
    <property type="entry name" value="nsP3_ZBD"/>
    <property type="match status" value="1"/>
</dbReference>
<dbReference type="Pfam" id="PF01707">
    <property type="entry name" value="Peptidase_C9"/>
    <property type="match status" value="1"/>
</dbReference>
<dbReference type="Pfam" id="PF00978">
    <property type="entry name" value="RdRP_2"/>
    <property type="match status" value="1"/>
</dbReference>
<dbReference type="Pfam" id="PF20896">
    <property type="entry name" value="ToMV_Hel_N"/>
    <property type="match status" value="1"/>
</dbReference>
<dbReference type="Pfam" id="PF01443">
    <property type="entry name" value="Viral_helicase1"/>
    <property type="match status" value="1"/>
</dbReference>
<dbReference type="Pfam" id="PF01660">
    <property type="entry name" value="Vmethyltransf"/>
    <property type="match status" value="1"/>
</dbReference>
<dbReference type="SMART" id="SM00506">
    <property type="entry name" value="A1pp"/>
    <property type="match status" value="1"/>
</dbReference>
<dbReference type="SUPFAM" id="SSF56672">
    <property type="entry name" value="DNA/RNA polymerases"/>
    <property type="match status" value="1"/>
</dbReference>
<dbReference type="SUPFAM" id="SSF52949">
    <property type="entry name" value="Macro domain-like"/>
    <property type="match status" value="1"/>
</dbReference>
<dbReference type="SUPFAM" id="SSF52540">
    <property type="entry name" value="P-loop containing nucleoside triphosphate hydrolases"/>
    <property type="match status" value="1"/>
</dbReference>
<dbReference type="SUPFAM" id="SSF53335">
    <property type="entry name" value="S-adenosyl-L-methionine-dependent methyltransferases"/>
    <property type="match status" value="1"/>
</dbReference>
<dbReference type="PROSITE" id="PS51743">
    <property type="entry name" value="ALPHAVIRUS_MT"/>
    <property type="match status" value="1"/>
</dbReference>
<dbReference type="PROSITE" id="PS51154">
    <property type="entry name" value="MACRO"/>
    <property type="match status" value="1"/>
</dbReference>
<dbReference type="PROSITE" id="PS51520">
    <property type="entry name" value="NSP2PRO"/>
    <property type="match status" value="1"/>
</dbReference>
<dbReference type="PROSITE" id="PS51657">
    <property type="entry name" value="PSRV_HELICASE"/>
    <property type="match status" value="1"/>
</dbReference>
<dbReference type="PROSITE" id="PS50507">
    <property type="entry name" value="RDRP_SSRNA_POS"/>
    <property type="match status" value="1"/>
</dbReference>
<feature type="chain" id="PRO_0000308404" description="Polyprotein P1234">
    <location>
        <begin position="1"/>
        <end position="2515"/>
    </location>
</feature>
<feature type="chain" id="PRO_0000228788" description="Polyprotein P123'">
    <location>
        <begin position="1"/>
        <end position="1905"/>
    </location>
</feature>
<feature type="chain" id="PRO_0000228789" description="Polyprotein P123">
    <location>
        <begin position="1"/>
        <end position="1898"/>
    </location>
</feature>
<feature type="chain" id="PRO_0000041232" description="mRNA-capping enzyme nsP1">
    <location>
        <begin position="1"/>
        <end position="540"/>
    </location>
</feature>
<feature type="chain" id="PRO_0000041233" description="Protease nsP2">
    <location>
        <begin position="541"/>
        <end position="1347"/>
    </location>
</feature>
<feature type="chain" id="PRO_0000228790" description="Non-structural protein 3'">
    <location>
        <begin position="1348"/>
        <end position="1905"/>
    </location>
</feature>
<feature type="chain" id="PRO_0000041234" description="Non-structural protein 3">
    <location>
        <begin position="1348"/>
        <end position="1898"/>
    </location>
</feature>
<feature type="chain" id="PRO_0000041235" description="RNA-directed RNA polymerase nsP4">
    <location>
        <begin position="1906"/>
        <end position="2515"/>
    </location>
</feature>
<feature type="domain" description="Alphavirus-like MT" evidence="11">
    <location>
        <begin position="30"/>
        <end position="260"/>
    </location>
</feature>
<feature type="domain" description="(+)RNA virus helicase ATP-binding" evidence="10">
    <location>
        <begin position="695"/>
        <end position="850"/>
    </location>
</feature>
<feature type="domain" description="(+)RNA virus helicase C-terminal" evidence="10">
    <location>
        <begin position="851"/>
        <end position="999"/>
    </location>
</feature>
<feature type="domain" description="Peptidase C9" evidence="9">
    <location>
        <begin position="1012"/>
        <end position="1341"/>
    </location>
</feature>
<feature type="domain" description="Macro" evidence="7">
    <location>
        <begin position="1348"/>
        <end position="1507"/>
    </location>
</feature>
<feature type="domain" description="RdRp catalytic" evidence="8">
    <location>
        <begin position="2269"/>
        <end position="2384"/>
    </location>
</feature>
<feature type="region of interest" description="NsP1 membrane-binding" evidence="3">
    <location>
        <begin position="245"/>
        <end position="264"/>
    </location>
</feature>
<feature type="region of interest" description="Nucleolus localization signal" evidence="3">
    <location>
        <begin position="1013"/>
        <end position="1032"/>
    </location>
</feature>
<feature type="region of interest" description="Disordered" evidence="12">
    <location>
        <begin position="1678"/>
        <end position="1705"/>
    </location>
</feature>
<feature type="region of interest" description="Disordered" evidence="12">
    <location>
        <begin position="1777"/>
        <end position="1797"/>
    </location>
</feature>
<feature type="short sequence motif" description="Nuclear export signal" evidence="4">
    <location>
        <begin position="1066"/>
        <end position="1075"/>
    </location>
</feature>
<feature type="short sequence motif" description="Nuclear localization signal" evidence="3">
    <location>
        <begin position="1196"/>
        <end position="1200"/>
    </location>
</feature>
<feature type="short sequence motif" description="FGDF; binding to host G3BP1" evidence="3">
    <location>
        <begin position="1839"/>
        <end position="1842"/>
    </location>
</feature>
<feature type="short sequence motif" description="FGDF; binding to host G3BP1" evidence="3">
    <location>
        <begin position="1862"/>
        <end position="1865"/>
    </location>
</feature>
<feature type="active site" description="For cysteine protease nsP2 activity" evidence="9">
    <location>
        <position position="1021"/>
    </location>
</feature>
<feature type="active site" description="For cysteine protease nsP2 activity" evidence="9">
    <location>
        <position position="1098"/>
    </location>
</feature>
<feature type="binding site" evidence="10">
    <location>
        <begin position="726"/>
        <end position="733"/>
    </location>
    <ligand>
        <name>a ribonucleoside 5'-triphosphate</name>
        <dbReference type="ChEBI" id="CHEBI:61557"/>
    </ligand>
</feature>
<feature type="binding site" evidence="6">
    <location>
        <position position="1371"/>
    </location>
    <ligand>
        <name>ADP-D-ribose</name>
        <dbReference type="ChEBI" id="CHEBI:57967"/>
    </ligand>
</feature>
<feature type="binding site" evidence="6">
    <location>
        <position position="1379"/>
    </location>
    <ligand>
        <name>ADP-D-ribose</name>
        <dbReference type="ChEBI" id="CHEBI:57967"/>
    </ligand>
</feature>
<feature type="binding site" evidence="5">
    <location>
        <position position="1459"/>
    </location>
    <ligand>
        <name>ADP-D-ribose</name>
        <dbReference type="ChEBI" id="CHEBI:57967"/>
    </ligand>
</feature>
<feature type="binding site" evidence="5">
    <location>
        <position position="1460"/>
    </location>
    <ligand>
        <name>ADP-D-ribose</name>
        <dbReference type="ChEBI" id="CHEBI:57967"/>
    </ligand>
</feature>
<feature type="binding site" evidence="6">
    <location>
        <position position="1461"/>
    </location>
    <ligand>
        <name>ADP-D-ribose</name>
        <dbReference type="ChEBI" id="CHEBI:57967"/>
    </ligand>
</feature>
<feature type="binding site" evidence="2">
    <location>
        <position position="1610"/>
    </location>
    <ligand>
        <name>Zn(2+)</name>
        <dbReference type="ChEBI" id="CHEBI:29105"/>
    </ligand>
</feature>
<feature type="binding site" evidence="2">
    <location>
        <position position="1612"/>
    </location>
    <ligand>
        <name>Zn(2+)</name>
        <dbReference type="ChEBI" id="CHEBI:29105"/>
    </ligand>
</feature>
<feature type="binding site" evidence="2">
    <location>
        <position position="1635"/>
    </location>
    <ligand>
        <name>Zn(2+)</name>
        <dbReference type="ChEBI" id="CHEBI:29105"/>
    </ligand>
</feature>
<feature type="binding site" evidence="2">
    <location>
        <position position="1653"/>
    </location>
    <ligand>
        <name>Zn(2+)</name>
        <dbReference type="ChEBI" id="CHEBI:29105"/>
    </ligand>
</feature>
<feature type="site" description="Involved in the phosphoramide link with 7-methyl-GMP" evidence="4">
    <location>
        <position position="39"/>
    </location>
</feature>
<feature type="site" description="Cleavage; by protease nsP2" evidence="2">
    <location>
        <begin position="540"/>
        <end position="541"/>
    </location>
</feature>
<feature type="site" description="Cleavage; by protease nsP2" evidence="2">
    <location>
        <begin position="1347"/>
        <end position="1348"/>
    </location>
</feature>
<feature type="site" description="Cleavage; by protease nsP2" evidence="6">
    <location>
        <begin position="1905"/>
        <end position="1906"/>
    </location>
</feature>
<feature type="lipid moiety-binding region" description="S-palmitoyl cysteine; by host" evidence="6">
    <location>
        <position position="420"/>
    </location>
</feature>
<organism>
    <name type="scientific">Sindbis virus subtype Ockelbo (strain Edsbyn 82-5)</name>
    <name type="common">OCKV</name>
    <name type="synonym">Ockelbo virus</name>
    <dbReference type="NCBI Taxonomy" id="31699"/>
    <lineage>
        <taxon>Viruses</taxon>
        <taxon>Riboviria</taxon>
        <taxon>Orthornavirae</taxon>
        <taxon>Kitrinoviricota</taxon>
        <taxon>Alsuviricetes</taxon>
        <taxon>Martellivirales</taxon>
        <taxon>Togaviridae</taxon>
        <taxon>Alphavirus</taxon>
        <taxon>Sindbis virus</taxon>
    </lineage>
</organism>
<reference key="1">
    <citation type="journal article" date="1991" name="Virology">
        <title>Structure of the Ockelbo virus genome and its relationship to other Sindbis viruses.</title>
        <authorList>
            <person name="Shirako Y."/>
            <person name="Niklasson B."/>
            <person name="Dalrymple J.M."/>
            <person name="Strauss E.G."/>
            <person name="Strauss J.H."/>
        </authorList>
    </citation>
    <scope>NUCLEOTIDE SEQUENCE [GENOMIC RNA]</scope>
</reference>
<evidence type="ECO:0000250" key="1">
    <source>
        <dbReference type="UniProtKB" id="O90368"/>
    </source>
</evidence>
<evidence type="ECO:0000250" key="2">
    <source>
        <dbReference type="UniProtKB" id="P03317"/>
    </source>
</evidence>
<evidence type="ECO:0000250" key="3">
    <source>
        <dbReference type="UniProtKB" id="P08411"/>
    </source>
</evidence>
<evidence type="ECO:0000250" key="4">
    <source>
        <dbReference type="UniProtKB" id="P27282"/>
    </source>
</evidence>
<evidence type="ECO:0000250" key="5">
    <source>
        <dbReference type="UniProtKB" id="P36328"/>
    </source>
</evidence>
<evidence type="ECO:0000250" key="6">
    <source>
        <dbReference type="UniProtKB" id="Q8JUX6"/>
    </source>
</evidence>
<evidence type="ECO:0000255" key="7">
    <source>
        <dbReference type="PROSITE-ProRule" id="PRU00490"/>
    </source>
</evidence>
<evidence type="ECO:0000255" key="8">
    <source>
        <dbReference type="PROSITE-ProRule" id="PRU00539"/>
    </source>
</evidence>
<evidence type="ECO:0000255" key="9">
    <source>
        <dbReference type="PROSITE-ProRule" id="PRU00853"/>
    </source>
</evidence>
<evidence type="ECO:0000255" key="10">
    <source>
        <dbReference type="PROSITE-ProRule" id="PRU00990"/>
    </source>
</evidence>
<evidence type="ECO:0000255" key="11">
    <source>
        <dbReference type="PROSITE-ProRule" id="PRU01079"/>
    </source>
</evidence>
<evidence type="ECO:0000256" key="12">
    <source>
        <dbReference type="SAM" id="MobiDB-lite"/>
    </source>
</evidence>
<evidence type="ECO:0000305" key="13"/>
<comment type="function">
    <molecule>Polyprotein P1234</molecule>
    <text evidence="6">Inactive precursor of the viral replicase, which is activated by cleavages carried out by the viral protease nsP2.</text>
</comment>
<comment type="function">
    <molecule>Polyprotein P123</molecule>
    <text evidence="2">The early replication complex formed by the polyprotein P123 and nsP4 synthesizes minus-strand RNAs (By similarity). As soon P123 is cleaved into mature proteins, the plus-strand RNAs synthesis begins (By similarity).</text>
</comment>
<comment type="function">
    <molecule>Polyprotein P123'</molecule>
    <text evidence="13">The early replication complex formed by the polyprotein P123' and nsP4 synthesizes minus-strand RNAs (Probable). Polyprotein P123' is a short-lived polyprotein that accumulates during early stage of infection (Probable). As soon P123' is cleaved into mature proteins, the plus-strand RNAs synthesis begins (Probable).</text>
</comment>
<comment type="function">
    <molecule>mRNA-capping enzyme nsP1</molecule>
    <text evidence="2 3 6 13">Cytoplasmic capping enzyme that catalyzes two virus-specific reactions: methyltransferase and nsP1 guanylyltransferase (By similarity). mRNA-capping is necessary since all viral RNAs are synthesized in the cytoplasm, and host capping enzymes are restricted to the nucleus (Probable). The enzymatic reaction involves a covalent link between 7-methyl-GMP and nsP1, whereas eukaryotic capping enzymes form a covalent complex only with GMP (By similarity). nsP1 capping consists in the following reactions: GTP is first methylated into 7-methyl-GMP and then is covalently linked to nsP1 to form the m7GMp-nsP1 complex from which 7-methyl-GMP complex is transferred to the mRNA to create the cap structure (By similarity). NsP1 is needed for the initiation of the minus-strand RNAs synthesis (By similarity). Probably serves as a membrane anchor for the replication complex composed of nsP1-nsP4 (By similarity). Palmitoylated nsP1 is remodeling host cell cytoskeleton, and induces filopodium-like structure formation at the surface of the host cell (By similarity). Interacts with host TMEM45B; this interaction leads to viral replication inhibition (By similarity).</text>
</comment>
<comment type="function">
    <molecule>Protease nsP2</molecule>
    <text evidence="2 3 6">Multifunctional protein whose N-terminus is part of the RNA polymerase complex and displays NTPase, RNA triphosphatase and helicase activities (By similarity). NTPase and RNA triphosphatase are involved in viral RNA capping and helicase keeps a check on the dsRNA replication intermediates (By similarity). The C-terminus harbors a protease that specifically cleaves the polyproteins and releases the mature proteins (By similarity). Required for the shutoff of minus-strand RNAs synthesis (By similarity). Specifically inhibits the host IFN response by promoting the nuclear export of host STAT1 (By similarity). Also inhibits host transcription by inducing rapid proteasome-dependent degradation of POLR2A, a catalytic subunit of the RNAPII complex (By similarity). The resulting inhibition of cellular protein synthesis serves to ensure maximal viral gene expression and to evade host immune response (By similarity).</text>
</comment>
<comment type="function">
    <molecule>Non-structural protein 3'</molecule>
    <text evidence="2 13">Seems to be essential for minus-strand RNAs and subgenomic 26S mRNAs synthesis (By similarity). Displays mono-ADP-ribosylhydrolase activity (Probable). ADP-ribosylation is a post-translational modification that controls various processes of the host cell and the virus probably needs to revert it for optimal viral replication (Probable). Binds proteins of FXR family and sequesters them into the viral RNA replication complexes thereby inhibiting the formation of host stress granules on viral mRNAs (Probable). The nsp3'-FXR complexes bind viral RNAs and probably orchestrate the assembly of viral replication complexes, thanks to the ability of FXR family members to self-assemble and bind DNA (Probable).</text>
</comment>
<comment type="function">
    <molecule>Non-structural protein 3</molecule>
    <text evidence="2 6">Seems to be essential for minus-strand RNAs and subgenomic 26S mRNAs synthesis (By similarity). Displays mono-ADP-ribosylhydrolase activity (By similarity). ADP-ribosylation is a post-translantional modification that controls various processes of the host cell and the virus probably needs to revert it for optimal viral replication (By similarity). Binds proteins of G3BP family and sequesters them into the viral RNA replication complexes thereby inhibiting the formation of host stress granules on viral mRNAs (By similarity). The nsp3-G3BP complexes bind viral RNAs and probably orchestrate the assembly of viral replication complexes, thanks to the ability of G3BP family members to self-assemble and bind DNA (By similarity).</text>
</comment>
<comment type="function">
    <molecule>RNA-directed RNA polymerase nsP4</molecule>
    <text evidence="2">RNA dependent RNA polymerase (By similarity). Replicates genomic and antigenomic RNA by recognizing replications specific signals. The early replication complex formed by the polyprotein P123 and nsP4 synthesizes minus-strand RNAs (By similarity). The late replication complex composed of fully processed nsP1-nsP4 is responsible for the production of genomic and subgenomic plus-strand RNAs (By similarity). The core catalytic domain of nsP4 also possesses terminal adenylyltransferase (TATase) activity that is probably involved in maintenance and repair of the poly(A) tail, an element required for replication of the viral genome (By similarity). Interacts with host TMEM45B; this interaction leads to viral replication inhibition (By similarity).</text>
</comment>
<comment type="catalytic activity">
    <reaction evidence="4">
        <text>GTP + S-adenosyl-L-methionine = N(7)-methyl-GTP + S-adenosyl-L-homocysteine</text>
        <dbReference type="Rhea" id="RHEA:46948"/>
        <dbReference type="ChEBI" id="CHEBI:37565"/>
        <dbReference type="ChEBI" id="CHEBI:57856"/>
        <dbReference type="ChEBI" id="CHEBI:59789"/>
        <dbReference type="ChEBI" id="CHEBI:87133"/>
    </reaction>
</comment>
<comment type="catalytic activity">
    <reaction evidence="2">
        <text>N(7)-methyl-GTP + L-histidyl-[protein] = N(tele)-(N(7)-methylguanosine 5'-phospho)-L-histidyl-[protein] + diphosphate</text>
        <dbReference type="Rhea" id="RHEA:54792"/>
        <dbReference type="Rhea" id="RHEA-COMP:9745"/>
        <dbReference type="Rhea" id="RHEA-COMP:13995"/>
        <dbReference type="ChEBI" id="CHEBI:29979"/>
        <dbReference type="ChEBI" id="CHEBI:33019"/>
        <dbReference type="ChEBI" id="CHEBI:87133"/>
        <dbReference type="ChEBI" id="CHEBI:138334"/>
    </reaction>
    <physiologicalReaction direction="left-to-right" evidence="2">
        <dbReference type="Rhea" id="RHEA:54793"/>
    </physiologicalReaction>
</comment>
<comment type="catalytic activity">
    <reaction evidence="4">
        <text>N(tele)-(N(7)-methylguanosine 5'-phospho)-L-histidyl-[protein] + a 5'-end diphospho-(purine-ribonucleoside) in mRNA + H(+) = a 5'-end (N(7)-methyl 5'-triphosphoguanosine)-(purine-ribonucleoside) in mRNA + L-histidyl-[protein]</text>
        <dbReference type="Rhea" id="RHEA:54800"/>
        <dbReference type="Rhea" id="RHEA-COMP:9745"/>
        <dbReference type="Rhea" id="RHEA-COMP:12925"/>
        <dbReference type="Rhea" id="RHEA-COMP:13929"/>
        <dbReference type="Rhea" id="RHEA-COMP:13995"/>
        <dbReference type="ChEBI" id="CHEBI:15378"/>
        <dbReference type="ChEBI" id="CHEBI:29979"/>
        <dbReference type="ChEBI" id="CHEBI:133968"/>
        <dbReference type="ChEBI" id="CHEBI:138276"/>
        <dbReference type="ChEBI" id="CHEBI:138334"/>
    </reaction>
</comment>
<comment type="catalytic activity">
    <reaction evidence="3">
        <text>a 5'-end triphospho-ribonucleoside in mRNA + H2O = a 5'-end diphospho-ribonucleoside in mRNA + phosphate + H(+)</text>
        <dbReference type="Rhea" id="RHEA:67004"/>
        <dbReference type="Rhea" id="RHEA-COMP:17164"/>
        <dbReference type="Rhea" id="RHEA-COMP:17165"/>
        <dbReference type="ChEBI" id="CHEBI:15377"/>
        <dbReference type="ChEBI" id="CHEBI:15378"/>
        <dbReference type="ChEBI" id="CHEBI:43474"/>
        <dbReference type="ChEBI" id="CHEBI:167616"/>
        <dbReference type="ChEBI" id="CHEBI:167618"/>
        <dbReference type="EC" id="3.6.1.74"/>
    </reaction>
    <physiologicalReaction direction="left-to-right" evidence="3">
        <dbReference type="Rhea" id="RHEA:67005"/>
    </physiologicalReaction>
</comment>
<comment type="catalytic activity">
    <reaction evidence="6">
        <text>a ribonucleoside 5'-triphosphate + H2O = a ribonucleoside 5'-diphosphate + phosphate + H(+)</text>
        <dbReference type="Rhea" id="RHEA:23680"/>
        <dbReference type="ChEBI" id="CHEBI:15377"/>
        <dbReference type="ChEBI" id="CHEBI:15378"/>
        <dbReference type="ChEBI" id="CHEBI:43474"/>
        <dbReference type="ChEBI" id="CHEBI:57930"/>
        <dbReference type="ChEBI" id="CHEBI:61557"/>
        <dbReference type="EC" id="3.6.1.15"/>
    </reaction>
</comment>
<comment type="catalytic activity">
    <reaction evidence="6">
        <text>ATP + H2O = ADP + phosphate + H(+)</text>
        <dbReference type="Rhea" id="RHEA:13065"/>
        <dbReference type="ChEBI" id="CHEBI:15377"/>
        <dbReference type="ChEBI" id="CHEBI:15378"/>
        <dbReference type="ChEBI" id="CHEBI:30616"/>
        <dbReference type="ChEBI" id="CHEBI:43474"/>
        <dbReference type="ChEBI" id="CHEBI:456216"/>
        <dbReference type="EC" id="3.6.4.13"/>
    </reaction>
</comment>
<comment type="catalytic activity">
    <reaction evidence="8">
        <text>RNA(n) + a ribonucleoside 5'-triphosphate = RNA(n+1) + diphosphate</text>
        <dbReference type="Rhea" id="RHEA:21248"/>
        <dbReference type="Rhea" id="RHEA-COMP:14527"/>
        <dbReference type="Rhea" id="RHEA-COMP:17342"/>
        <dbReference type="ChEBI" id="CHEBI:33019"/>
        <dbReference type="ChEBI" id="CHEBI:61557"/>
        <dbReference type="ChEBI" id="CHEBI:140395"/>
        <dbReference type="EC" id="2.7.7.48"/>
    </reaction>
</comment>
<comment type="catalytic activity">
    <reaction evidence="2">
        <text>RNA(n) + ATP = RNA(n)-3'-adenine ribonucleotide + diphosphate</text>
        <dbReference type="Rhea" id="RHEA:11332"/>
        <dbReference type="Rhea" id="RHEA-COMP:14527"/>
        <dbReference type="Rhea" id="RHEA-COMP:17347"/>
        <dbReference type="ChEBI" id="CHEBI:30616"/>
        <dbReference type="ChEBI" id="CHEBI:33019"/>
        <dbReference type="ChEBI" id="CHEBI:140395"/>
        <dbReference type="ChEBI" id="CHEBI:173115"/>
        <dbReference type="EC" id="2.7.7.19"/>
    </reaction>
</comment>
<comment type="catalytic activity">
    <reaction evidence="2">
        <text>4-O-(ADP-D-ribosyl)-L-aspartyl-[protein] + H2O = L-aspartyl-[protein] + ADP-D-ribose + H(+)</text>
        <dbReference type="Rhea" id="RHEA:54428"/>
        <dbReference type="Rhea" id="RHEA-COMP:9867"/>
        <dbReference type="Rhea" id="RHEA-COMP:13832"/>
        <dbReference type="ChEBI" id="CHEBI:15377"/>
        <dbReference type="ChEBI" id="CHEBI:15378"/>
        <dbReference type="ChEBI" id="CHEBI:29961"/>
        <dbReference type="ChEBI" id="CHEBI:57967"/>
        <dbReference type="ChEBI" id="CHEBI:138102"/>
    </reaction>
    <physiologicalReaction direction="left-to-right" evidence="2">
        <dbReference type="Rhea" id="RHEA:54429"/>
    </physiologicalReaction>
</comment>
<comment type="catalytic activity">
    <reaction evidence="2">
        <text>5-O-(ADP-D-ribosyl)-L-glutamyl-[protein] + H2O = L-glutamyl-[protein] + ADP-D-ribose + H(+)</text>
        <dbReference type="Rhea" id="RHEA:58248"/>
        <dbReference type="Rhea" id="RHEA-COMP:10208"/>
        <dbReference type="Rhea" id="RHEA-COMP:15089"/>
        <dbReference type="ChEBI" id="CHEBI:15377"/>
        <dbReference type="ChEBI" id="CHEBI:15378"/>
        <dbReference type="ChEBI" id="CHEBI:29973"/>
        <dbReference type="ChEBI" id="CHEBI:57967"/>
        <dbReference type="ChEBI" id="CHEBI:142540"/>
    </reaction>
    <physiologicalReaction direction="left-to-right" evidence="2">
        <dbReference type="Rhea" id="RHEA:58249"/>
    </physiologicalReaction>
</comment>
<comment type="catalytic activity">
    <reaction evidence="6">
        <text>ADP-alpha-D-ribose 1''-phosphate + H2O = ADP-D-ribose + phosphate</text>
        <dbReference type="Rhea" id="RHEA:25029"/>
        <dbReference type="ChEBI" id="CHEBI:15377"/>
        <dbReference type="ChEBI" id="CHEBI:43474"/>
        <dbReference type="ChEBI" id="CHEBI:57967"/>
        <dbReference type="ChEBI" id="CHEBI:58753"/>
        <dbReference type="EC" id="3.1.3.84"/>
    </reaction>
    <physiologicalReaction direction="left-to-right" evidence="6">
        <dbReference type="Rhea" id="RHEA:25030"/>
    </physiologicalReaction>
</comment>
<comment type="cofactor">
    <cofactor evidence="2">
        <name>Mg(2+)</name>
        <dbReference type="ChEBI" id="CHEBI:18420"/>
    </cofactor>
    <cofactor evidence="2">
        <name>Mn(2+)</name>
        <dbReference type="ChEBI" id="CHEBI:29035"/>
    </cofactor>
    <text evidence="2">For nsP4 adenylyltransferase activity; Mn(2+) supports catalysis at 60% of the levels observed with Mg(2+).</text>
</comment>
<comment type="cofactor">
    <cofactor evidence="2">
        <name>Mg(2+)</name>
        <dbReference type="ChEBI" id="CHEBI:18420"/>
    </cofactor>
    <text evidence="2">For nsP4 RNA-directed RNA polymerase activity.</text>
</comment>
<comment type="cofactor">
    <cofactor evidence="4">
        <name>Mg(2+)</name>
        <dbReference type="ChEBI" id="CHEBI:18420"/>
    </cofactor>
    <text evidence="4">For nsP1 guanylylation.</text>
</comment>
<comment type="cofactor">
    <cofactor>
        <name>Mg(2+)</name>
        <dbReference type="ChEBI" id="CHEBI:18420"/>
    </cofactor>
    <text evidence="6">For nsP2 RNA triphosphatase activity.</text>
</comment>
<comment type="cofactor">
    <cofactor>
        <name>Mg(2+)</name>
        <dbReference type="ChEBI" id="CHEBI:18420"/>
    </cofactor>
    <text evidence="6">For nsP2 NTPase activity.</text>
</comment>
<comment type="subunit">
    <molecule>mRNA-capping enzyme nsP1</molecule>
    <text evidence="2 4">Interacts with non-structural protein 3 (By similarity). Interacts with RNA-directed RNA polymerase nsP4 (By similarity). Interacts with protease nsP2 (By similarity). interacts with itself (By similarity).</text>
</comment>
<comment type="subunit">
    <molecule>Non-structural protein 3</molecule>
    <text evidence="2 4">Interacts with mRNA-capping enzyme nsP1 (By similarity). Interacts with host DDX1 (By similarity). Interacts with host DDX3 (By similarity). Interacts (via C-terminus) with host G3BP1; this interaction inhibits the formation of host stress granules on viral mRNAs and the nsp3-G3BP1 complexes bind viral RNAs and probably orchestrate the assembly of viral replication complexes (By similarity). Interacts (via C-terminus) with host G3BP2; this interaction inhibits the formation of host stress granules on viral mRNAs and the nsp3-G3BP2 complexes bind viral RNAs and probably orchestrate the assembly of viral replication complexes (By similarity).</text>
</comment>
<comment type="subunit">
    <molecule>RNA-directed RNA polymerase nsP4</molecule>
    <text evidence="2 4">Interacts with mRNA-capping enzyme nsP1 (By similarity). Interacts with protease nsP2 (By similarity). interacts with itself (By similarity).</text>
</comment>
<comment type="subunit">
    <molecule>Protease nsP2</molecule>
    <text evidence="2 4">Interacts with RNA-directed RNA polymerase nsP4 (By similarity). Interacts with mRNA-capping enzyme nsP1 (By similarity). Interacts with KPNA1/karyopherin-alpha1; this interaction probably allows the active transport of protease nsP2 into the host nucleus (By similarity).</text>
</comment>
<comment type="subcellular location">
    <molecule>Polyprotein P1234</molecule>
    <subcellularLocation>
        <location evidence="13">Host cytoplasmic vesicle membrane</location>
        <topology evidence="13">Peripheral membrane protein</topology>
    </subcellularLocation>
    <text evidence="13">Part of cytoplasmic vesicles, which are probably formed at the plasma membrane and internalized leading to late endosomal/lysosomal spherules containing the replication complex.</text>
</comment>
<comment type="subcellular location">
    <molecule>Polyprotein P123'</molecule>
    <subcellularLocation>
        <location evidence="13">Host cytoplasmic vesicle membrane</location>
        <topology evidence="13">Peripheral membrane protein</topology>
    </subcellularLocation>
    <text evidence="13">Part of cytoplasmic vesicles, which are probably formed at the plasma membrane and internalized leading to late endosomal/lysosomal spherules containing the replication complex.</text>
</comment>
<comment type="subcellular location">
    <molecule>Polyprotein P123</molecule>
    <subcellularLocation>
        <location evidence="13">Host cytoplasmic vesicle membrane</location>
        <topology evidence="13">Peripheral membrane protein</topology>
    </subcellularLocation>
    <text evidence="13">Part of cytoplasmic vesicles, which are probably formed at the plasma membrane and internalized leading to late endosomal/lysosomal spherules containing the replication complex.</text>
</comment>
<comment type="subcellular location">
    <molecule>mRNA-capping enzyme nsP1</molecule>
    <subcellularLocation>
        <location evidence="3">Host cytoplasmic vesicle membrane</location>
        <topology evidence="3">Lipid-anchor</topology>
    </subcellularLocation>
    <subcellularLocation>
        <location evidence="3">Host cell membrane</location>
        <topology evidence="3">Lipid-anchor</topology>
        <orientation evidence="3">Cytoplasmic side</orientation>
    </subcellularLocation>
    <subcellularLocation>
        <location evidence="3">Host cell projection</location>
        <location evidence="3">Host filopodium</location>
    </subcellularLocation>
    <text evidence="3">In the late phase of infection, the polyprotein is quickly cleaved before localization to cellular membranes. Then a fraction of nsP1 localizes to the inner surface of the plasma membrane and its filopodial extensions. Only the palmitoylated nsP1 localizes to the host filopodia (By similarity). NsP1 is also part of cytoplasmic vesicles, which are probably formed at the plasma membrane and internalized leading to late endosomal/lysosomal spherules containing the replication complex (By similarity).</text>
</comment>
<comment type="subcellular location">
    <molecule>Protease nsP2</molecule>
    <subcellularLocation>
        <location evidence="3">Host cytoplasmic vesicle membrane</location>
        <topology evidence="3">Peripheral membrane protein</topology>
    </subcellularLocation>
    <subcellularLocation>
        <location evidence="4">Host nucleus</location>
    </subcellularLocation>
    <subcellularLocation>
        <location evidence="4">Host cytoplasm</location>
    </subcellularLocation>
    <text evidence="3 4">In the late phase of infection, the polyprotein is quickly cleaved before localization to cellular membranes. Then approximately half of nsP2 is found in the nucleus (By similarity). Shuttles between cytoplasm and nucleus (By similarity). NsP2 is also part of cytoplasmic vesicles, which are probably formed at the plasma membrane and internalized leading to late endosomal/lysosomal spherules containing the replication complex (By similarity).</text>
</comment>
<comment type="subcellular location">
    <molecule>Non-structural protein 3'</molecule>
    <subcellularLocation>
        <location evidence="2">Host cytoplasmic vesicle membrane</location>
        <topology evidence="13">Peripheral membrane protein</topology>
    </subcellularLocation>
    <text evidence="2">In the late phase of infection, the polyprotein is quickly cleaved before localization to cellular membranes. Then nsP3 and nsP3' form aggregates in cytoplasm (By similarity). NsP3' is also part of cytoplasmic vesicles, which are probably formed at the plasma membrane and internalized leading to late endosomal/lysosomal spherules containing the replication complex (By similarity).</text>
</comment>
<comment type="subcellular location">
    <molecule>Non-structural protein 3</molecule>
    <subcellularLocation>
        <location evidence="2">Host cytoplasmic vesicle membrane</location>
        <topology evidence="13">Peripheral membrane protein</topology>
    </subcellularLocation>
    <text evidence="2">In the late phase of infection, the polyprotein is quickly cleaved before localization to cellular membranes. Then nsP3 and nsP3' form aggregates in cytoplasm (By similarity). NsP3 is also part of cytoplasmic vesicles, which are probably formed at the plasma membrane and internalized leading to late endosomal/lysosomal spherules containing the replication complex (By similarity).</text>
</comment>
<comment type="subcellular location">
    <molecule>RNA-directed RNA polymerase nsP4</molecule>
    <subcellularLocation>
        <location>Host cytoplasmic vesicle membrane</location>
        <topology evidence="2">Peripheral membrane protein</topology>
    </subcellularLocation>
    <text evidence="3">NsP4 is part of cytoplasmic vesicles, which are probably formed at the plasma membrane and internalized leading to late endosomal/lysosomal spherules containing the replication complex.</text>
</comment>
<comment type="domain">
    <molecule>Protease nsP2</molecule>
    <text evidence="4 6">The N-terminus exhibits NTPase and RNA triphosphatase activities and is proposed to have helicase activity, whereas the C-terminus possesses protease activity (By similarity). Contains a nuclear localization signal and a nuclear export signal, these two motifs are probably involved in the shuttling between the cytoplasm and the nucleus of nsP2 (By similarity). The C-terminus is required for promoting the export of host STAT1 (By similarity).</text>
</comment>
<comment type="domain">
    <molecule>Non-structural protein 3</molecule>
    <text evidence="2 3">In the N-terminus, the macro domain displays a mono-ADP-ribosylhydrolase activity (By similarity). The central part has a zinc-binding function (By similarity). The C-terminus contains two FGDF motifs necessary and sufficient for formation of the nsP3/G3BP1 complex (By similarity).</text>
</comment>
<comment type="domain">
    <molecule>Non-structural protein 3'</molecule>
    <text evidence="2 3">In the N-terminus, the macro domain displays a mono-ADP-ribosylhydrolase activity (By similarity). The central part has a zinc-binding function (By similarity). The C-terminus contains two FGDF motifs necessary and sufficient for formation of the nsP3'/G3BP1 complex (By similarity).</text>
</comment>
<comment type="PTM">
    <molecule>Polyprotein P1234</molecule>
    <text evidence="2">Specific enzymatic cleavages in vivo yield mature proteins (By similarity). The processing of the polyprotein is temporally regulated (By similarity). In early stages (1.7 hpi), P1234 is first cleaved in trans through its nsP2 protease activity, releasing P123' and nsP4, which associate to form the early replication complex (By similarity). At the same time, P1234 is also cut at the nsP1/nsP2 site early in infection but with lower efficiency (By similarity). After replication of the viral minus-strand RNAs (4 hpi), the polyproteins are cut at the nsP1/nsP2 and nsP2/nsP3 sites very efficiently, preventing accumulation of P123' and P1234 and allowing the formation of the late replication complex (By similarity). NsP3'/nsP4 site is not cleaved anymore and P34 is produced rather than nsP4 (By similarity).</text>
</comment>
<comment type="PTM">
    <molecule>Polyprotein P123</molecule>
    <text evidence="2">Specific enzymatic cleavages in vivo yield mature proteins (By similarity). The processing of the polyprotein is temporally regulated (By similarity). In early stages (1.7 hpi), P123 is cleaved at the nsP1/nsP2 site with low efficiency (By similarity). After replication of the viral minus-strand RNAs (4 hpi), the polyproteins are cut at the nsP1/nsP2 and nsP2/nsP3 sites very efficiently, preventing accumulation of P123 and allowing the formation of the late replication complex (By similarity).</text>
</comment>
<comment type="PTM">
    <molecule>Polyprotein P123'</molecule>
    <text evidence="2">Specific enzymatic cleavages in vivo yield mature proteins (By similarity). The processing of the polyprotein is temporally regulated (By similarity). In early stages (1.7 hpi), P123' is cleaved at the nsP1/nsP2 site with low efficiency (By similarity). After replication of the viral minus-strand RNAs (4 hpi), the polyproteins are cut at the nsP1/nsP2 and nsP2/nsP3 sites very efficiently, preventing accumulation of P123' and allowing the formation of the late replication complex (By similarity).</text>
</comment>
<comment type="PTM">
    <molecule>mRNA-capping enzyme nsP1</molecule>
    <text evidence="6">Palmitoylated by host palmitoyltransferases ZDHHC2 and ZDHHC19.</text>
</comment>
<comment type="PTM">
    <molecule>Non-structural protein 3</molecule>
    <text evidence="3">Phosphorylated by host on serines and threonines.</text>
</comment>
<comment type="PTM">
    <molecule>Non-structural protein 3'</molecule>
    <text evidence="3">Phosphorylated by host on serines and threonines.</text>
</comment>
<comment type="PTM">
    <molecule>RNA-directed RNA polymerase nsP4</molecule>
    <text evidence="2">Ubiquitinated; targets the protein for rapid degradation via the ubiquitin system (By similarity). Nsp4 is present in extremely low quantities due to low frequency of translation through the amber stop-codon and the degradation by the ubiquitin pathway (By similarity).</text>
</comment>
<comment type="miscellaneous">
    <text evidence="2">Viral replication produces dsRNA in the late phase of infection, resulting in a strong activation of host EIF2AK2/PKR, leading to almost complete phosphorylation of EIF2A (By similarity). This inactivates completely cellular translation initiation, resulting shutoff of host proteins synthesis (By similarity). However, phosphorylation of EIF2A is probably not the only mechanism responsible for the host translation shutoff (By similarity). The viral translation can still occur normally because it relies on a hairpin structure in the coding region of sgRNA and is EIF2A-, EIF2D-, EIF4G- EIF4A-independent (By similarity).</text>
</comment>
<comment type="miscellaneous">
    <text evidence="1 2 13">The genome codes for P123, but readthrough of a terminator codon UGA occurs between the codons for Tyr-1898 and Leu-1900 giving rise to P1234 (Probable). P1234 is cleaved quickly by nsP2 into P123' and nsP4 (By similarity). Further processing of p123' gives nsP1, nsP2 and nsP3' which is 6 amino acids longer than nsP3 since the cleavage site is after the readthrough (By similarity). This unusual molecular mechanism ensures that few nsP4 are produced compared to other non-structural proteins (By similarity). Mutant viruses with no alternative termination site grow significantly slower than wild-type virus (By similarity). The opal termination codon is frequently mutated to a sense codon on passage in cell culture (By similarity). The presence of the opal codon may be a requirement for viral maintenance in both vertebrate and invertebrate hosts and a selective advantage may be conferred in cell culture for the sense codon (By similarity).</text>
</comment>
<accession>P27283</accession>
<protein>
    <recommendedName>
        <fullName>Polyprotein P1234</fullName>
        <shortName>P1234</shortName>
    </recommendedName>
    <alternativeName>
        <fullName>Non-structural polyprotein</fullName>
    </alternativeName>
    <component>
        <recommendedName>
            <fullName>Polyprotein P123'</fullName>
            <shortName>P123'</shortName>
        </recommendedName>
    </component>
    <component>
        <recommendedName>
            <fullName>Polyprotein P123</fullName>
            <shortName>P123</shortName>
        </recommendedName>
    </component>
    <component>
        <recommendedName>
            <fullName>mRNA-capping enzyme nsP1</fullName>
            <ecNumber evidence="4">2.1.1.-</ecNumber>
            <ecNumber evidence="2">2.7.7.-</ecNumber>
        </recommendedName>
        <alternativeName>
            <fullName>Non-structural protein 1</fullName>
        </alternativeName>
    </component>
    <component>
        <recommendedName>
            <fullName>Protease nsP2</fullName>
            <ecNumber evidence="6">3.4.22.-</ecNumber>
            <ecNumber evidence="6">3.6.1.15</ecNumber>
            <ecNumber evidence="3">3.6.1.74</ecNumber>
            <ecNumber evidence="6">3.6.4.13</ecNumber>
        </recommendedName>
        <alternativeName>
            <fullName>Non-structural protein 2</fullName>
            <shortName>nsP2</shortName>
        </alternativeName>
    </component>
    <component>
        <recommendedName>
            <fullName>Non-structural protein 3'</fullName>
            <shortName>nsP3'</shortName>
            <ecNumber evidence="13">3.1.3.84</ecNumber>
        </recommendedName>
    </component>
    <component>
        <recommendedName>
            <fullName>Non-structural protein 3</fullName>
            <shortName>nsP3</shortName>
            <ecNumber evidence="6">3.1.3.84</ecNumber>
        </recommendedName>
    </component>
    <component>
        <recommendedName>
            <fullName>RNA-directed RNA polymerase nsP4</fullName>
            <ecNumber evidence="2">2.7.7.19</ecNumber>
            <ecNumber evidence="8">2.7.7.48</ecNumber>
        </recommendedName>
        <alternativeName>
            <fullName>Non-structural protein 4</fullName>
            <shortName>nsP4</shortName>
        </alternativeName>
    </component>
</protein>